<proteinExistence type="inferred from homology"/>
<reference key="1">
    <citation type="journal article" date="2003" name="J. Bacteriol.">
        <title>Comparative analyses of the complete genome sequences of Pierce's disease and citrus variegated chlorosis strains of Xylella fastidiosa.</title>
        <authorList>
            <person name="Van Sluys M.A."/>
            <person name="de Oliveira M.C."/>
            <person name="Monteiro-Vitorello C.B."/>
            <person name="Miyaki C.Y."/>
            <person name="Furlan L.R."/>
            <person name="Camargo L.E.A."/>
            <person name="da Silva A.C.R."/>
            <person name="Moon D.H."/>
            <person name="Takita M.A."/>
            <person name="Lemos E.G.M."/>
            <person name="Machado M.A."/>
            <person name="Ferro M.I.T."/>
            <person name="da Silva F.R."/>
            <person name="Goldman M.H.S."/>
            <person name="Goldman G.H."/>
            <person name="Lemos M.V.F."/>
            <person name="El-Dorry H."/>
            <person name="Tsai S.M."/>
            <person name="Carrer H."/>
            <person name="Carraro D.M."/>
            <person name="de Oliveira R.C."/>
            <person name="Nunes L.R."/>
            <person name="Siqueira W.J."/>
            <person name="Coutinho L.L."/>
            <person name="Kimura E.T."/>
            <person name="Ferro E.S."/>
            <person name="Harakava R."/>
            <person name="Kuramae E.E."/>
            <person name="Marino C.L."/>
            <person name="Giglioti E."/>
            <person name="Abreu I.L."/>
            <person name="Alves L.M.C."/>
            <person name="do Amaral A.M."/>
            <person name="Baia G.S."/>
            <person name="Blanco S.R."/>
            <person name="Brito M.S."/>
            <person name="Cannavan F.S."/>
            <person name="Celestino A.V."/>
            <person name="da Cunha A.F."/>
            <person name="Fenille R.C."/>
            <person name="Ferro J.A."/>
            <person name="Formighieri E.F."/>
            <person name="Kishi L.T."/>
            <person name="Leoni S.G."/>
            <person name="Oliveira A.R."/>
            <person name="Rosa V.E. Jr."/>
            <person name="Sassaki F.T."/>
            <person name="Sena J.A.D."/>
            <person name="de Souza A.A."/>
            <person name="Truffi D."/>
            <person name="Tsukumo F."/>
            <person name="Yanai G.M."/>
            <person name="Zaros L.G."/>
            <person name="Civerolo E.L."/>
            <person name="Simpson A.J.G."/>
            <person name="Almeida N.F. Jr."/>
            <person name="Setubal J.C."/>
            <person name="Kitajima J.P."/>
        </authorList>
    </citation>
    <scope>NUCLEOTIDE SEQUENCE [LARGE SCALE GENOMIC DNA]</scope>
    <source>
        <strain>Temecula1 / ATCC 700964</strain>
    </source>
</reference>
<comment type="function">
    <text evidence="1">Required for insertion of 4Fe-4S clusters for at least IspG.</text>
</comment>
<comment type="cofactor">
    <cofactor evidence="1">
        <name>iron-sulfur cluster</name>
        <dbReference type="ChEBI" id="CHEBI:30408"/>
    </cofactor>
    <text evidence="1">Binds 1 iron-sulfur cluster per subunit.</text>
</comment>
<comment type="subunit">
    <text evidence="1">Homodimer.</text>
</comment>
<comment type="similarity">
    <text evidence="1">Belongs to the HesB/IscA family.</text>
</comment>
<evidence type="ECO:0000255" key="1">
    <source>
        <dbReference type="HAMAP-Rule" id="MF_01380"/>
    </source>
</evidence>
<feature type="chain" id="PRO_0000077032" description="Iron-sulfur cluster insertion protein ErpA">
    <location>
        <begin position="1"/>
        <end position="128"/>
    </location>
</feature>
<feature type="binding site" evidence="1">
    <location>
        <position position="56"/>
    </location>
    <ligand>
        <name>iron-sulfur cluster</name>
        <dbReference type="ChEBI" id="CHEBI:30408"/>
    </ligand>
</feature>
<feature type="binding site" evidence="1">
    <location>
        <position position="120"/>
    </location>
    <ligand>
        <name>iron-sulfur cluster</name>
        <dbReference type="ChEBI" id="CHEBI:30408"/>
    </ligand>
</feature>
<feature type="binding site" evidence="1">
    <location>
        <position position="122"/>
    </location>
    <ligand>
        <name>iron-sulfur cluster</name>
        <dbReference type="ChEBI" id="CHEBI:30408"/>
    </ligand>
</feature>
<sequence length="128" mass="13862">MTMLISLPTAPSVPNYQSLERPLNFTMAAAAKVRELIQEENNADLALRVYIQGGGCSGFQYGFEFDENRADDDLALETDGVVLLVDPLSLQYLLGAEVDYTESLTGAKFVIRNPNAKTTCGCGSSFSV</sequence>
<protein>
    <recommendedName>
        <fullName evidence="1">Iron-sulfur cluster insertion protein ErpA</fullName>
    </recommendedName>
</protein>
<keyword id="KW-0408">Iron</keyword>
<keyword id="KW-0411">Iron-sulfur</keyword>
<keyword id="KW-0479">Metal-binding</keyword>
<keyword id="KW-1185">Reference proteome</keyword>
<gene>
    <name evidence="1" type="primary">erpA</name>
    <name type="ordered locus">PD_1667</name>
</gene>
<accession>P64343</accession>
<accession>Q9PG97</accession>
<organism>
    <name type="scientific">Xylella fastidiosa (strain Temecula1 / ATCC 700964)</name>
    <dbReference type="NCBI Taxonomy" id="183190"/>
    <lineage>
        <taxon>Bacteria</taxon>
        <taxon>Pseudomonadati</taxon>
        <taxon>Pseudomonadota</taxon>
        <taxon>Gammaproteobacteria</taxon>
        <taxon>Lysobacterales</taxon>
        <taxon>Lysobacteraceae</taxon>
        <taxon>Xylella</taxon>
    </lineage>
</organism>
<dbReference type="EMBL" id="AE009442">
    <property type="protein sequence ID" value="AAO29507.1"/>
    <property type="molecule type" value="Genomic_DNA"/>
</dbReference>
<dbReference type="RefSeq" id="WP_010892935.1">
    <property type="nucleotide sequence ID" value="NC_004556.1"/>
</dbReference>
<dbReference type="SMR" id="P64343"/>
<dbReference type="GeneID" id="93905503"/>
<dbReference type="KEGG" id="xft:PD_1667"/>
<dbReference type="HOGENOM" id="CLU_069054_5_3_6"/>
<dbReference type="Proteomes" id="UP000002516">
    <property type="component" value="Chromosome"/>
</dbReference>
<dbReference type="GO" id="GO:0005829">
    <property type="term" value="C:cytosol"/>
    <property type="evidence" value="ECO:0007669"/>
    <property type="project" value="TreeGrafter"/>
</dbReference>
<dbReference type="GO" id="GO:0051537">
    <property type="term" value="F:2 iron, 2 sulfur cluster binding"/>
    <property type="evidence" value="ECO:0007669"/>
    <property type="project" value="TreeGrafter"/>
</dbReference>
<dbReference type="GO" id="GO:0051539">
    <property type="term" value="F:4 iron, 4 sulfur cluster binding"/>
    <property type="evidence" value="ECO:0007669"/>
    <property type="project" value="TreeGrafter"/>
</dbReference>
<dbReference type="GO" id="GO:0005506">
    <property type="term" value="F:iron ion binding"/>
    <property type="evidence" value="ECO:0007669"/>
    <property type="project" value="UniProtKB-UniRule"/>
</dbReference>
<dbReference type="GO" id="GO:0016226">
    <property type="term" value="P:iron-sulfur cluster assembly"/>
    <property type="evidence" value="ECO:0007669"/>
    <property type="project" value="UniProtKB-UniRule"/>
</dbReference>
<dbReference type="FunFam" id="2.60.300.12:FF:000002">
    <property type="entry name" value="Iron-sulfur cluster insertion protein ErpA"/>
    <property type="match status" value="1"/>
</dbReference>
<dbReference type="Gene3D" id="2.60.300.12">
    <property type="entry name" value="HesB-like domain"/>
    <property type="match status" value="1"/>
</dbReference>
<dbReference type="HAMAP" id="MF_01380">
    <property type="entry name" value="Fe_S_insert_ErpA"/>
    <property type="match status" value="1"/>
</dbReference>
<dbReference type="InterPro" id="IPR000361">
    <property type="entry name" value="FeS_biogenesis"/>
</dbReference>
<dbReference type="InterPro" id="IPR016092">
    <property type="entry name" value="FeS_cluster_insertion"/>
</dbReference>
<dbReference type="InterPro" id="IPR017870">
    <property type="entry name" value="FeS_cluster_insertion_CS"/>
</dbReference>
<dbReference type="InterPro" id="IPR023063">
    <property type="entry name" value="FeS_cluster_insertion_RrpA"/>
</dbReference>
<dbReference type="InterPro" id="IPR035903">
    <property type="entry name" value="HesB-like_dom_sf"/>
</dbReference>
<dbReference type="NCBIfam" id="TIGR00049">
    <property type="entry name" value="iron-sulfur cluster assembly accessory protein"/>
    <property type="match status" value="1"/>
</dbReference>
<dbReference type="NCBIfam" id="NF010147">
    <property type="entry name" value="PRK13623.1"/>
    <property type="match status" value="1"/>
</dbReference>
<dbReference type="PANTHER" id="PTHR43011">
    <property type="entry name" value="IRON-SULFUR CLUSTER ASSEMBLY 2 HOMOLOG, MITOCHONDRIAL"/>
    <property type="match status" value="1"/>
</dbReference>
<dbReference type="PANTHER" id="PTHR43011:SF1">
    <property type="entry name" value="IRON-SULFUR CLUSTER ASSEMBLY 2 HOMOLOG, MITOCHONDRIAL"/>
    <property type="match status" value="1"/>
</dbReference>
<dbReference type="Pfam" id="PF01521">
    <property type="entry name" value="Fe-S_biosyn"/>
    <property type="match status" value="1"/>
</dbReference>
<dbReference type="SUPFAM" id="SSF89360">
    <property type="entry name" value="HesB-like domain"/>
    <property type="match status" value="1"/>
</dbReference>
<dbReference type="PROSITE" id="PS01152">
    <property type="entry name" value="HESB"/>
    <property type="match status" value="1"/>
</dbReference>
<name>ERPA_XYLFT</name>